<accession>Q13888</accession>
<accession>Q15570</accession>
<accession>Q15571</accession>
<accession>Q9BS41</accession>
<evidence type="ECO:0000250" key="1">
    <source>
        <dbReference type="UniProtKB" id="A0JN27"/>
    </source>
</evidence>
<evidence type="ECO:0000255" key="2">
    <source>
        <dbReference type="PROSITE-ProRule" id="PRU00219"/>
    </source>
</evidence>
<evidence type="ECO:0000269" key="3">
    <source>
    </source>
</evidence>
<evidence type="ECO:0000269" key="4">
    <source>
    </source>
</evidence>
<evidence type="ECO:0000269" key="5">
    <source>
    </source>
</evidence>
<evidence type="ECO:0000269" key="6">
    <source>
    </source>
</evidence>
<evidence type="ECO:0000269" key="7">
    <source>
    </source>
</evidence>
<evidence type="ECO:0000269" key="8">
    <source>
    </source>
</evidence>
<evidence type="ECO:0000269" key="9">
    <source>
    </source>
</evidence>
<evidence type="ECO:0000303" key="10">
    <source>
    </source>
</evidence>
<evidence type="ECO:0000303" key="11">
    <source>
    </source>
</evidence>
<evidence type="ECO:0000305" key="12"/>
<evidence type="ECO:0007744" key="13">
    <source>
        <dbReference type="PDB" id="5IVW"/>
    </source>
</evidence>
<evidence type="ECO:0007744" key="14">
    <source>
        <dbReference type="PDB" id="5IY6"/>
    </source>
</evidence>
<evidence type="ECO:0007744" key="15">
    <source>
        <dbReference type="PDB" id="5IY7"/>
    </source>
</evidence>
<evidence type="ECO:0007744" key="16">
    <source>
        <dbReference type="PDB" id="5IY8"/>
    </source>
</evidence>
<evidence type="ECO:0007744" key="17">
    <source>
        <dbReference type="PDB" id="5IY9"/>
    </source>
</evidence>
<evidence type="ECO:0007744" key="18">
    <source>
        <dbReference type="PDB" id="6RO4"/>
    </source>
</evidence>
<evidence type="ECO:0007744" key="19">
    <source>
        <dbReference type="PDB" id="7NVW"/>
    </source>
</evidence>
<evidence type="ECO:0007744" key="20">
    <source>
        <dbReference type="PDB" id="7NVX"/>
    </source>
</evidence>
<evidence type="ECO:0007744" key="21">
    <source>
        <dbReference type="PDB" id="7NVY"/>
    </source>
</evidence>
<evidence type="ECO:0007744" key="22">
    <source>
        <dbReference type="PDB" id="7NVZ"/>
    </source>
</evidence>
<evidence type="ECO:0007744" key="23">
    <source>
        <dbReference type="PDB" id="7NW0"/>
    </source>
</evidence>
<evidence type="ECO:0007829" key="24">
    <source>
        <dbReference type="PDB" id="8EBU"/>
    </source>
</evidence>
<proteinExistence type="evidence at protein level"/>
<organism>
    <name type="scientific">Homo sapiens</name>
    <name type="common">Human</name>
    <dbReference type="NCBI Taxonomy" id="9606"/>
    <lineage>
        <taxon>Eukaryota</taxon>
        <taxon>Metazoa</taxon>
        <taxon>Chordata</taxon>
        <taxon>Craniata</taxon>
        <taxon>Vertebrata</taxon>
        <taxon>Euteleostomi</taxon>
        <taxon>Mammalia</taxon>
        <taxon>Eutheria</taxon>
        <taxon>Euarchontoglires</taxon>
        <taxon>Primates</taxon>
        <taxon>Haplorrhini</taxon>
        <taxon>Catarrhini</taxon>
        <taxon>Hominidae</taxon>
        <taxon>Homo</taxon>
    </lineage>
</organism>
<feature type="chain" id="PRO_0000119248" description="General transcription factor IIH subunit 2">
    <location>
        <begin position="1"/>
        <end position="395"/>
    </location>
</feature>
<feature type="domain" description="VWFA" evidence="2">
    <location>
        <begin position="60"/>
        <end position="236"/>
    </location>
</feature>
<feature type="zinc finger region" description="C4-type">
    <location>
        <begin position="291"/>
        <end position="308"/>
    </location>
</feature>
<feature type="modified residue" description="Phosphotyrosine" evidence="1">
    <location>
        <position position="95"/>
    </location>
</feature>
<feature type="sequence variant" id="VAR_011664" description="In dbSNP:rs2576895." evidence="8">
    <original>I</original>
    <variation>M</variation>
    <location>
        <position position="151"/>
    </location>
</feature>
<feature type="sequence variant" id="VAR_011665" description="In dbSNP:rs201102513." evidence="8">
    <original>V</original>
    <variation>L</variation>
    <location>
        <position position="236"/>
    </location>
</feature>
<feature type="mutagenesis site" description="Reconstituted TFIIH complex lacks p62 and has no transcriptional activity." evidence="4">
    <original>C</original>
    <variation>A</variation>
    <location>
        <position position="291"/>
    </location>
</feature>
<feature type="mutagenesis site" description="Reconstituted TFIIH complex lacks p62 and has no transcriptional activity." evidence="4">
    <original>C</original>
    <variation>A</variation>
    <location>
        <position position="308"/>
    </location>
</feature>
<feature type="mutagenesis site" description="No effect on the transcriptional activity of the reconstituted TFIIH complex." evidence="4">
    <original>C</original>
    <variation>A</variation>
    <location>
        <position position="345"/>
    </location>
</feature>
<feature type="mutagenesis site" description="No effect on the transcriptional activity of the reconstituted TFIIH complex." evidence="4">
    <original>C</original>
    <variation>A</variation>
    <location>
        <position position="360"/>
    </location>
</feature>
<feature type="mutagenesis site" description="No effect on the transcriptional activity of the reconstituted TFIIH complex." evidence="4">
    <original>C</original>
    <variation>A</variation>
    <location>
        <position position="363"/>
    </location>
</feature>
<feature type="mutagenesis site" description="No effect on the transcriptional activity of the reconstituted TFIIH complex." evidence="4">
    <original>H</original>
    <variation>A</variation>
    <location>
        <position position="376"/>
    </location>
</feature>
<feature type="mutagenesis site" description="No effect on the transcriptional activity of the reconstituted TFIIH complex." evidence="4">
    <original>H</original>
    <variation>A</variation>
    <location>
        <position position="380"/>
    </location>
</feature>
<feature type="mutagenesis site" description="No effect on the transcriptional activity of the reconstituted TFIIH complex." evidence="4">
    <original>C</original>
    <variation>A</variation>
    <location>
        <position position="382"/>
    </location>
</feature>
<feature type="sequence conflict" description="In Ref. 4; AAA64502." evidence="12" ref="4">
    <original>T</original>
    <variation>S</variation>
    <location>
        <position position="129"/>
    </location>
</feature>
<feature type="helix" evidence="24">
    <location>
        <begin position="18"/>
        <end position="20"/>
    </location>
</feature>
<feature type="strand" evidence="24">
    <location>
        <begin position="25"/>
        <end position="27"/>
    </location>
</feature>
<feature type="helix" evidence="24">
    <location>
        <begin position="30"/>
        <end position="41"/>
    </location>
</feature>
<feature type="strand" evidence="24">
    <location>
        <begin position="59"/>
        <end position="66"/>
    </location>
</feature>
<feature type="helix" evidence="24">
    <location>
        <begin position="69"/>
        <end position="72"/>
    </location>
</feature>
<feature type="strand" evidence="24">
    <location>
        <begin position="75"/>
        <end position="78"/>
    </location>
</feature>
<feature type="helix" evidence="24">
    <location>
        <begin position="80"/>
        <end position="98"/>
    </location>
</feature>
<feature type="strand" evidence="24">
    <location>
        <begin position="103"/>
        <end position="110"/>
    </location>
</feature>
<feature type="strand" evidence="24">
    <location>
        <begin position="113"/>
        <end position="122"/>
    </location>
</feature>
<feature type="helix" evidence="24">
    <location>
        <begin position="124"/>
        <end position="135"/>
    </location>
</feature>
<feature type="helix" evidence="24">
    <location>
        <begin position="145"/>
        <end position="156"/>
    </location>
</feature>
<feature type="strand" evidence="24">
    <location>
        <begin position="163"/>
        <end position="171"/>
    </location>
</feature>
<feature type="helix" evidence="24">
    <location>
        <begin position="182"/>
        <end position="191"/>
    </location>
</feature>
<feature type="strand" evidence="24">
    <location>
        <begin position="194"/>
        <end position="203"/>
    </location>
</feature>
<feature type="helix" evidence="24">
    <location>
        <begin position="206"/>
        <end position="215"/>
    </location>
</feature>
<feature type="strand" evidence="24">
    <location>
        <begin position="219"/>
        <end position="221"/>
    </location>
</feature>
<feature type="helix" evidence="24">
    <location>
        <begin position="225"/>
        <end position="236"/>
    </location>
</feature>
<feature type="strand" evidence="24">
    <location>
        <begin position="251"/>
        <end position="253"/>
    </location>
</feature>
<feature type="helix" evidence="24">
    <location>
        <begin position="273"/>
        <end position="276"/>
    </location>
</feature>
<feature type="strand" evidence="24">
    <location>
        <begin position="278"/>
        <end position="280"/>
    </location>
</feature>
<feature type="strand" evidence="24">
    <location>
        <begin position="288"/>
        <end position="290"/>
    </location>
</feature>
<feature type="turn" evidence="24">
    <location>
        <begin position="292"/>
        <end position="294"/>
    </location>
</feature>
<feature type="strand" evidence="24">
    <location>
        <begin position="297"/>
        <end position="304"/>
    </location>
</feature>
<feature type="turn" evidence="24">
    <location>
        <begin position="306"/>
        <end position="308"/>
    </location>
</feature>
<feature type="helix" evidence="24">
    <location>
        <begin position="315"/>
        <end position="319"/>
    </location>
</feature>
<feature type="helix" evidence="24">
    <location>
        <begin position="322"/>
        <end position="325"/>
    </location>
</feature>
<feature type="strand" evidence="24">
    <location>
        <begin position="332"/>
        <end position="335"/>
    </location>
</feature>
<feature type="turn" evidence="24">
    <location>
        <begin position="336"/>
        <end position="338"/>
    </location>
</feature>
<feature type="turn" evidence="24">
    <location>
        <begin position="346"/>
        <end position="348"/>
    </location>
</feature>
<feature type="strand" evidence="24">
    <location>
        <begin position="354"/>
        <end position="359"/>
    </location>
</feature>
<feature type="turn" evidence="24">
    <location>
        <begin position="361"/>
        <end position="363"/>
    </location>
</feature>
<feature type="helix" evidence="24">
    <location>
        <begin position="369"/>
        <end position="377"/>
    </location>
</feature>
<feature type="helix" evidence="24">
    <location>
        <begin position="383"/>
        <end position="386"/>
    </location>
</feature>
<reference key="1">
    <citation type="journal article" date="1994" name="EMBO J.">
        <title>p44 and p34 subunits of the BTF2/TFIIH transcription factor have homologies with SSL1, a yeast protein involved in DNA repair.</title>
        <authorList>
            <person name="Humbert S."/>
            <person name="van Vuuren H.A."/>
            <person name="Lutz Y."/>
            <person name="Hoeijmakers J.H.J."/>
            <person name="Egly J.-M."/>
            <person name="Moncollin V."/>
        </authorList>
    </citation>
    <scope>NUCLEOTIDE SEQUENCE [MRNA]</scope>
    <scope>PROTEIN SEQUENCE OF 35-40; 46-54; 60-68; 117-125 AND 214-229</scope>
    <scope>FUNCTION</scope>
    <scope>SUBUNIT</scope>
</reference>
<reference key="2">
    <citation type="submission" date="1998-07" db="EMBL/GenBank/DDBJ databases">
        <authorList>
            <person name="Zhang Q."/>
            <person name="Huang Q."/>
            <person name="Song H."/>
            <person name="Peng J."/>
            <person name="Fu G."/>
            <person name="Mao M."/>
            <person name="Dai M."/>
            <person name="Mao Y."/>
            <person name="Zhou J."/>
            <person name="Chen Z."/>
            <person name="Chen J."/>
        </authorList>
    </citation>
    <scope>NUCLEOTIDE SEQUENCE [MRNA]</scope>
    <source>
        <tissue>Pituitary tumor</tissue>
    </source>
</reference>
<reference key="3">
    <citation type="journal article" date="2004" name="Genome Res.">
        <title>The status, quality, and expansion of the NIH full-length cDNA project: the Mammalian Gene Collection (MGC).</title>
        <authorList>
            <consortium name="The MGC Project Team"/>
        </authorList>
    </citation>
    <scope>NUCLEOTIDE SEQUENCE [LARGE SCALE MRNA]</scope>
    <source>
        <tissue>Skin</tissue>
    </source>
</reference>
<reference key="4">
    <citation type="journal article" date="1995" name="Eur. J. Hum. Genet.">
        <title>A provisional transcript map of the spinal muscular atrophy (SMA) critical region.</title>
        <authorList>
            <person name="van der Steege G."/>
            <person name="Draaijers T.G."/>
            <person name="Grootscholten P.M."/>
            <person name="Osinga J."/>
            <person name="Anzevino R."/>
            <person name="Velona I."/>
            <person name="Den Dunnen J.T."/>
            <person name="Scheffer H."/>
            <person name="Brahe C."/>
            <person name="van Ommen G.J.B."/>
            <person name="Buys C.H.C.M."/>
        </authorList>
    </citation>
    <scope>NUCLEOTIDE SEQUENCE [MRNA] OF 1-130 AND 327-395</scope>
    <source>
        <tissue>Pre-B cell</tissue>
    </source>
</reference>
<reference key="5">
    <citation type="journal article" date="1998" name="Genomics">
        <title>Sequence of a 131-kb region of 5q13.1 containing the spinal muscular atrophy candidate genes SMN and NAIP.</title>
        <authorList>
            <person name="Chen Q."/>
            <person name="Baird S.D."/>
            <person name="Mahadevan M."/>
            <person name="Besner-Johnston A."/>
            <person name="Farahani R."/>
            <person name="Xuan J.-Y."/>
            <person name="Kang X."/>
            <person name="Lefebvre C."/>
            <person name="Ikeda J.-E."/>
            <person name="Korneluk R.G."/>
            <person name="MacKenzie A.E."/>
        </authorList>
    </citation>
    <scope>NUCLEOTIDE SEQUENCE [GENOMIC DNA] OF 253-395</scope>
    <source>
        <tissue>Brain</tissue>
    </source>
</reference>
<reference key="6">
    <citation type="journal article" date="1999" name="Mol. Cell">
        <title>Reconstitution of the transcription factor TFIIH: assignment of functions for the three enzymatic subunits, XPB, XPD, and cdk7.</title>
        <authorList>
            <person name="Tirode F."/>
            <person name="Busso D."/>
            <person name="Coin F."/>
            <person name="Egly J.-M."/>
        </authorList>
    </citation>
    <scope>FUNCTION</scope>
    <scope>SUBUNIT</scope>
</reference>
<reference key="7">
    <citation type="journal article" date="1998" name="J. Biol. Chem.">
        <title>Immunoaffinity purification and functional characterization of human transcription factor IIH and RNA polymerase II from clonal cell lines that conditionally express epitope-tagged subunits of the multiprotein complexes.</title>
        <authorList>
            <person name="Kershnar E."/>
            <person name="Wu S.-Y."/>
            <person name="Chiang C.-M."/>
        </authorList>
    </citation>
    <scope>IDENTIFICATION IN THE TFIIH BASAL TRANSCRIPTION FACTOR</scope>
    <scope>FUNCTION</scope>
</reference>
<reference key="8">
    <citation type="journal article" date="2001" name="J. Biol. Chem.">
        <title>A role of the C-terminal part of p44 in the promoter escape activity of transcription factor IIH.</title>
        <authorList>
            <person name="Tremeau-Bravard A."/>
            <person name="Perez C."/>
            <person name="Egly J.-M."/>
        </authorList>
    </citation>
    <scope>MUTAGENESIS OF CYS-291; CYS-308; CYS-345; CYS-360; CYS-363; HIS-376; HIS-380 AND CYS-382</scope>
    <scope>FUNCTION</scope>
    <scope>SUBUNIT</scope>
</reference>
<reference key="9">
    <citation type="journal article" date="2005" name="Biol. Chem.">
        <title>Varicella-zoster virus IE63 protein represses the basal transcription machinery by disorganizing the pre-initiation complex.</title>
        <authorList>
            <person name="Di Valentin E."/>
            <person name="Bontems S."/>
            <person name="Habran L."/>
            <person name="Jolois O."/>
            <person name="Markine-Goriaynoff N."/>
            <person name="Vanderplasschen A."/>
            <person name="Sadzot-Delvaux C."/>
            <person name="Piette J."/>
        </authorList>
    </citation>
    <scope>INTERACTION WITH VARICELLA-ZOSTER VIRUS IE63 PROTEIN</scope>
</reference>
<reference key="10">
    <citation type="journal article" date="2011" name="BMC Syst. Biol.">
        <title>Initial characterization of the human central proteome.</title>
        <authorList>
            <person name="Burkard T.R."/>
            <person name="Planyavsky M."/>
            <person name="Kaupe I."/>
            <person name="Breitwieser F.P."/>
            <person name="Buerckstuemmer T."/>
            <person name="Bennett K.L."/>
            <person name="Superti-Furga G."/>
            <person name="Colinge J."/>
        </authorList>
    </citation>
    <scope>IDENTIFICATION BY MASS SPECTROMETRY [LARGE SCALE ANALYSIS]</scope>
</reference>
<reference evidence="13 14 15 16 17" key="11">
    <citation type="journal article" date="2016" name="Nature">
        <title>Near-atomic resolution visualization of human transcription promoter opening.</title>
        <authorList>
            <person name="He Y."/>
            <person name="Yan C."/>
            <person name="Fang J."/>
            <person name="Inouye C."/>
            <person name="Tjian R."/>
            <person name="Ivanov I."/>
            <person name="Nogales E."/>
        </authorList>
    </citation>
    <scope>STRUCTURE BY ELECTRON MICROSCOPY (6.30 ANGSTROMS) OF TRANSCRIPTION PRE-INITIATION COMPLEX</scope>
    <scope>SUBUNIT</scope>
    <scope>SUBCELLULAR LOCATION</scope>
    <scope>FUNCTION</scope>
</reference>
<reference evidence="18" key="12">
    <citation type="journal article" date="2019" name="Nat. Commun.">
        <title>Structural basis of TFIIH activation for nucleotide excision repair.</title>
        <authorList>
            <person name="Kokic G."/>
            <person name="Chernev A."/>
            <person name="Tegunov D."/>
            <person name="Dienemann C."/>
            <person name="Urlaub H."/>
            <person name="Cramer P."/>
        </authorList>
    </citation>
    <scope>STRUCTURE BY ELECTRON MICROSCOPY (3.50 ANGSTROMS) OF NUCLEOTIDE EXCISION REPAIR INTERMEDIATE IN COMPLEX WITH XPA AND DNA SUBSTRATE</scope>
</reference>
<reference evidence="19 20 21 22 23" key="13">
    <citation type="journal article" date="2021" name="Nature">
        <title>Structures of mammalian RNA polymerase II pre-initiation complexes.</title>
        <authorList>
            <person name="Aibara S."/>
            <person name="Schilbach S."/>
            <person name="Cramer P."/>
        </authorList>
    </citation>
    <scope>STRUCTURE BY ELECTRON MICROSCOPY (2.90 ANGSTROMS) OF PRE-INITIATION COMPLEXES WITH PIG POLYMERASE II</scope>
</reference>
<reference key="14">
    <citation type="journal article" date="1997" name="Hum. Mol. Genet.">
        <title>A multicopy transcription-repair gene, BTF2p44, maps to the SMA region and demonstrates SMA associated deletions.</title>
        <authorList>
            <person name="Carter T.A."/>
            <person name="Bonnemann C.G."/>
            <person name="Wang C.H."/>
            <person name="Obici S."/>
            <person name="Parano E."/>
            <person name="Bonaldo M.F."/>
            <person name="Ross B.M."/>
            <person name="Penchaszadeh G.K."/>
            <person name="Mackenzie A.E."/>
            <person name="Soares M.B."/>
            <person name="Kunkel L.M."/>
            <person name="Gilliam T.C."/>
        </authorList>
    </citation>
    <scope>VARIANTS MET-151 AND LEU-236</scope>
    <scope>TISSUE SPECIFICITY</scope>
</reference>
<keyword id="KW-0002">3D-structure</keyword>
<keyword id="KW-0025">Alternative splicing</keyword>
<keyword id="KW-0903">Direct protein sequencing</keyword>
<keyword id="KW-0227">DNA damage</keyword>
<keyword id="KW-0234">DNA repair</keyword>
<keyword id="KW-0945">Host-virus interaction</keyword>
<keyword id="KW-0479">Metal-binding</keyword>
<keyword id="KW-0539">Nucleus</keyword>
<keyword id="KW-0597">Phosphoprotein</keyword>
<keyword id="KW-1267">Proteomics identification</keyword>
<keyword id="KW-1185">Reference proteome</keyword>
<keyword id="KW-0804">Transcription</keyword>
<keyword id="KW-0805">Transcription regulation</keyword>
<keyword id="KW-0862">Zinc</keyword>
<keyword id="KW-0863">Zinc-finger</keyword>
<sequence>MDEEPERTKRWEGGYERTWEILKEDESGSLKATIEDILFKAKRKRVFEHHGQVRLGMMRHLYVVVDGSRTMEDQDLKPNRLTCTLKLLEYFVEEYFDQNPISQIGIIVTKSKRAEKLTELSGNPRKHITSLKKAVDMTCHGEPSLYNSLSIAMQTLKHMPGHTSREVLIIFSSLTTCDPSNIYDLIKTLKAAKIRVSVIGLSAEVRVCTVLARETGGTYHVILDESHYKELLTHHVSPPPASSSSECSLIRMGFPQHTIASLSDQDAKPSFSMAHLDGNTEPGLTLGGYFCPQCRAKYCELPVECKICGLTLVSAPHLARSYHHLFPLDAFQEIPLEEYNGERFCYGCQGELKDQHVYVCAVCQNVFCVDCDVFVHDSLHCCPGCIHKIPAPSGV</sequence>
<protein>
    <recommendedName>
        <fullName>General transcription factor IIH subunit 2</fullName>
    </recommendedName>
    <alternativeName>
        <fullName>Basic transcription factor 2 44 kDa subunit</fullName>
        <shortName evidence="11">BTF2 p44</shortName>
    </alternativeName>
    <alternativeName>
        <fullName>General transcription factor IIH polypeptide 2</fullName>
    </alternativeName>
    <alternativeName>
        <fullName evidence="10 11">TFIIH basal transcription factor complex p44 subunit</fullName>
    </alternativeName>
</protein>
<comment type="function">
    <text evidence="3 4 6 7 9">Component of the general transcription and DNA repair factor IIH (TFIIH) core complex, which is involved in general and transcription-coupled nucleotide excision repair (NER) of damaged DNA and, when complexed to CAK, in RNA transcription by RNA polymerase II. In NER, TFIIH acts by opening DNA around the lesion to allow the excision of the damaged oligonucleotide and its replacement by a new DNA fragment. In transcription, TFIIH has an essential role in transcription initiation. When the pre-initiation complex (PIC) has been established, TFIIH is required for promoter opening and promoter escape. Phosphorylation of the C-terminal tail (CTD) of the largest subunit of RNA polymerase II by the kinase module CAK controls the initiation of transcription. The N-terminus of GTF2H2 interacts with and regulates XPD whereas an intact C-terminus is required for a successful escape of RNAP II form the promoter.</text>
</comment>
<comment type="subunit">
    <text evidence="3 4 6 7 9">Component of the TFIID-containing RNA polymerase II pre-initiation complex that is composed of TBP and at least GTF2A1, GTF2A2, GTF2E1, GTF2E2, GTF2F1, GTF2H2, GTF2H3, GTF2H4, GTF2H5, GTF2B, TCEA1, ERCC2 and ERCC3 (PubMed:27193682). Component of the 7-subunit TFIIH core complex composed of XPB/ERCC3, XPD/ERCC2, GTF2H1, GTF2H2, GTF2H3, GTF2H4 and GTF2H5, which is active in NER. The core complex associates with the 3-subunit CDK-activating kinase (CAK) module composed of CCNH/cyclin H, CDK7 and MNAT1 to form the 10-subunit holoenzyme (holo-TFIIH) active in transcription (PubMed:11319235, PubMed:9852112). Interacts with XPB, XPD, GTF2H1 and GTF2H3 (PubMed:11319235).</text>
</comment>
<comment type="subunit">
    <text evidence="5">(Microbial infection) Interacts with varicella-zoster virus IE63 protein.</text>
</comment>
<comment type="interaction">
    <interactant intactId="EBI-1565170">
        <id>Q13888</id>
    </interactant>
    <interactant intactId="EBI-6380590">
        <id>P18074</id>
        <label>ERCC2</label>
    </interactant>
    <organismsDiffer>false</organismsDiffer>
    <experiments>9</experiments>
</comment>
<comment type="interaction">
    <interactant intactId="EBI-1565170">
        <id>Q13888</id>
    </interactant>
    <interactant intactId="EBI-715539">
        <id>P32780</id>
        <label>GTF2H1</label>
    </interactant>
    <organismsDiffer>false</organismsDiffer>
    <experiments>7</experiments>
</comment>
<comment type="interaction">
    <interactant intactId="EBI-1565170">
        <id>Q13888</id>
    </interactant>
    <interactant intactId="EBI-6380438">
        <id>Q6ZYL4</id>
        <label>GTF2H5</label>
    </interactant>
    <organismsDiffer>false</organismsDiffer>
    <experiments>6</experiments>
</comment>
<comment type="subcellular location">
    <subcellularLocation>
        <location evidence="6">Nucleus</location>
    </subcellularLocation>
</comment>
<comment type="alternative products">
    <event type="alternative splicing"/>
    <isoform>
        <id>Q13888-1</id>
        <name>1</name>
        <sequence type="displayed"/>
    </isoform>
    <text>A number of isoforms may be produced. The isoforms may be also produced by incomplete gene duplication.</text>
</comment>
<comment type="tissue specificity">
    <text evidence="8">Widely expressed, with higher expression in skeletal muscle.</text>
</comment>
<comment type="similarity">
    <text evidence="12">Belongs to the GTF2H2 family.</text>
</comment>
<gene>
    <name type="primary">GTF2H2</name>
    <name type="synonym">BTF2P44</name>
</gene>
<dbReference type="EMBL" id="Z30094">
    <property type="protein sequence ID" value="CAA82910.1"/>
    <property type="molecule type" value="mRNA"/>
</dbReference>
<dbReference type="EMBL" id="AF078847">
    <property type="protein sequence ID" value="AAD44479.1"/>
    <property type="molecule type" value="mRNA"/>
</dbReference>
<dbReference type="EMBL" id="U21911">
    <property type="protein sequence ID" value="AAA64502.1"/>
    <property type="molecule type" value="mRNA"/>
</dbReference>
<dbReference type="EMBL" id="U21910">
    <property type="protein sequence ID" value="AAA64503.1"/>
    <property type="molecule type" value="mRNA"/>
</dbReference>
<dbReference type="EMBL" id="BC005345">
    <property type="protein sequence ID" value="AAH05345.1"/>
    <property type="molecule type" value="mRNA"/>
</dbReference>
<dbReference type="EMBL" id="U80017">
    <property type="protein sequence ID" value="AAC52046.1"/>
    <property type="molecule type" value="Genomic_DNA"/>
</dbReference>
<dbReference type="CCDS" id="CCDS34183.1">
    <molecule id="Q13888-1"/>
</dbReference>
<dbReference type="PIR" id="S44454">
    <property type="entry name" value="S44454"/>
</dbReference>
<dbReference type="RefSeq" id="NP_001351496.1">
    <molecule id="Q13888-1"/>
    <property type="nucleotide sequence ID" value="NM_001364567.2"/>
</dbReference>
<dbReference type="RefSeq" id="NP_001382316.1">
    <molecule id="Q13888-1"/>
    <property type="nucleotide sequence ID" value="NM_001395387.1"/>
</dbReference>
<dbReference type="RefSeq" id="NP_001382317.1">
    <molecule id="Q13888-1"/>
    <property type="nucleotide sequence ID" value="NM_001395388.1"/>
</dbReference>
<dbReference type="RefSeq" id="NP_001382320.1">
    <molecule id="Q13888-1"/>
    <property type="nucleotide sequence ID" value="NM_001395391.1"/>
</dbReference>
<dbReference type="RefSeq" id="NP_001382321.1">
    <molecule id="Q13888-1"/>
    <property type="nucleotide sequence ID" value="NM_001395392.1"/>
</dbReference>
<dbReference type="RefSeq" id="NP_001506.1">
    <molecule id="Q13888-1"/>
    <property type="nucleotide sequence ID" value="NM_001515.4"/>
</dbReference>
<dbReference type="RefSeq" id="XP_016864892.1">
    <property type="nucleotide sequence ID" value="XM_017009403.1"/>
</dbReference>
<dbReference type="RefSeq" id="XP_016864893.1">
    <property type="nucleotide sequence ID" value="XM_017009404.1"/>
</dbReference>
<dbReference type="RefSeq" id="XP_016864894.1">
    <property type="nucleotide sequence ID" value="XM_017009405.1"/>
</dbReference>
<dbReference type="RefSeq" id="XP_016864895.1">
    <property type="nucleotide sequence ID" value="XM_017009406.1"/>
</dbReference>
<dbReference type="RefSeq" id="XP_047273086.1">
    <molecule id="Q13888-1"/>
    <property type="nucleotide sequence ID" value="XM_047417130.1"/>
</dbReference>
<dbReference type="RefSeq" id="XP_054185923.1">
    <molecule id="Q13888-1"/>
    <property type="nucleotide sequence ID" value="XM_054329948.1"/>
</dbReference>
<dbReference type="RefSeq" id="XP_054185924.1">
    <molecule id="Q13888-1"/>
    <property type="nucleotide sequence ID" value="XM_054329949.1"/>
</dbReference>
<dbReference type="RefSeq" id="XP_054185925.1">
    <molecule id="Q13888-1"/>
    <property type="nucleotide sequence ID" value="XM_054329950.1"/>
</dbReference>
<dbReference type="RefSeq" id="XP_054208447.1">
    <molecule id="Q13888-1"/>
    <property type="nucleotide sequence ID" value="XM_054352472.1"/>
</dbReference>
<dbReference type="PDB" id="1Z60">
    <property type="method" value="NMR"/>
    <property type="chains" value="A=328-386"/>
</dbReference>
<dbReference type="PDB" id="5IVW">
    <property type="method" value="EM"/>
    <property type="resolution" value="10.00 A"/>
    <property type="chains" value="0=1-395"/>
</dbReference>
<dbReference type="PDB" id="5IY6">
    <property type="method" value="EM"/>
    <property type="resolution" value="7.20 A"/>
    <property type="chains" value="0=1-395"/>
</dbReference>
<dbReference type="PDB" id="5IY7">
    <property type="method" value="EM"/>
    <property type="resolution" value="8.60 A"/>
    <property type="chains" value="0=1-395"/>
</dbReference>
<dbReference type="PDB" id="5IY8">
    <property type="method" value="EM"/>
    <property type="resolution" value="7.90 A"/>
    <property type="chains" value="0=1-395"/>
</dbReference>
<dbReference type="PDB" id="5IY9">
    <property type="method" value="EM"/>
    <property type="resolution" value="6.30 A"/>
    <property type="chains" value="0=1-395"/>
</dbReference>
<dbReference type="PDB" id="5O85">
    <property type="method" value="X-ray"/>
    <property type="resolution" value="3.40 A"/>
    <property type="chains" value="B/D=1-395"/>
</dbReference>
<dbReference type="PDB" id="5OF4">
    <property type="method" value="EM"/>
    <property type="resolution" value="4.40 A"/>
    <property type="chains" value="E=1-395"/>
</dbReference>
<dbReference type="PDB" id="6NMI">
    <property type="method" value="EM"/>
    <property type="resolution" value="3.70 A"/>
    <property type="chains" value="E=51-387"/>
</dbReference>
<dbReference type="PDB" id="6O9L">
    <property type="method" value="EM"/>
    <property type="resolution" value="7.20 A"/>
    <property type="chains" value="6=1-395"/>
</dbReference>
<dbReference type="PDB" id="6O9M">
    <property type="method" value="EM"/>
    <property type="resolution" value="4.40 A"/>
    <property type="chains" value="6=1-395"/>
</dbReference>
<dbReference type="PDB" id="6RO4">
    <property type="method" value="EM"/>
    <property type="resolution" value="3.50 A"/>
    <property type="chains" value="D=1-395"/>
</dbReference>
<dbReference type="PDB" id="7AD8">
    <property type="method" value="EM"/>
    <property type="resolution" value="3.50 A"/>
    <property type="chains" value="D=1-395"/>
</dbReference>
<dbReference type="PDB" id="7EGB">
    <property type="method" value="EM"/>
    <property type="resolution" value="3.30 A"/>
    <property type="chains" value="2=1-395"/>
</dbReference>
<dbReference type="PDB" id="7EGC">
    <property type="method" value="EM"/>
    <property type="resolution" value="3.90 A"/>
    <property type="chains" value="2=1-395"/>
</dbReference>
<dbReference type="PDB" id="7ENA">
    <property type="method" value="EM"/>
    <property type="resolution" value="4.07 A"/>
    <property type="chains" value="2=1-395"/>
</dbReference>
<dbReference type="PDB" id="7ENC">
    <property type="method" value="EM"/>
    <property type="resolution" value="4.13 A"/>
    <property type="chains" value="2=1-395"/>
</dbReference>
<dbReference type="PDB" id="7LBM">
    <property type="method" value="EM"/>
    <property type="resolution" value="4.80 A"/>
    <property type="chains" value="a=1-395"/>
</dbReference>
<dbReference type="PDB" id="7NVR">
    <property type="method" value="EM"/>
    <property type="resolution" value="4.50 A"/>
    <property type="chains" value="6=1-395"/>
</dbReference>
<dbReference type="PDB" id="7NVW">
    <property type="method" value="EM"/>
    <property type="resolution" value="4.30 A"/>
    <property type="chains" value="6=1-395"/>
</dbReference>
<dbReference type="PDB" id="7NVX">
    <property type="method" value="EM"/>
    <property type="resolution" value="3.90 A"/>
    <property type="chains" value="6=1-395"/>
</dbReference>
<dbReference type="PDB" id="7NVY">
    <property type="method" value="EM"/>
    <property type="resolution" value="7.30 A"/>
    <property type="chains" value="6=1-395"/>
</dbReference>
<dbReference type="PDB" id="7NVZ">
    <property type="method" value="EM"/>
    <property type="resolution" value="7.20 A"/>
    <property type="chains" value="6=1-395"/>
</dbReference>
<dbReference type="PDB" id="7NW0">
    <property type="method" value="EM"/>
    <property type="resolution" value="6.60 A"/>
    <property type="chains" value="6=1-395"/>
</dbReference>
<dbReference type="PDB" id="8BVW">
    <property type="method" value="EM"/>
    <property type="resolution" value="4.00 A"/>
    <property type="chains" value="4=1-395"/>
</dbReference>
<dbReference type="PDB" id="8BYQ">
    <property type="method" value="EM"/>
    <property type="resolution" value="4.10 A"/>
    <property type="chains" value="4=1-395"/>
</dbReference>
<dbReference type="PDB" id="8EBS">
    <property type="method" value="EM"/>
    <property type="resolution" value="4.00 A"/>
    <property type="chains" value="E=1-395"/>
</dbReference>
<dbReference type="PDB" id="8EBT">
    <property type="method" value="EM"/>
    <property type="resolution" value="3.90 A"/>
    <property type="chains" value="E=8-387"/>
</dbReference>
<dbReference type="PDB" id="8EBU">
    <property type="method" value="EM"/>
    <property type="resolution" value="3.30 A"/>
    <property type="chains" value="E=1-395"/>
</dbReference>
<dbReference type="PDB" id="8EBV">
    <property type="method" value="EM"/>
    <property type="resolution" value="7.10 A"/>
    <property type="chains" value="E=1-395"/>
</dbReference>
<dbReference type="PDB" id="8EBW">
    <property type="method" value="EM"/>
    <property type="resolution" value="5.60 A"/>
    <property type="chains" value="E=1-395"/>
</dbReference>
<dbReference type="PDB" id="8EBX">
    <property type="method" value="EM"/>
    <property type="resolution" value="3.60 A"/>
    <property type="chains" value="E=1-395"/>
</dbReference>
<dbReference type="PDB" id="8EBY">
    <property type="method" value="EM"/>
    <property type="resolution" value="3.60 A"/>
    <property type="chains" value="E=1-395"/>
</dbReference>
<dbReference type="PDB" id="8GXQ">
    <property type="method" value="EM"/>
    <property type="resolution" value="5.04 A"/>
    <property type="chains" value="HG=1-395"/>
</dbReference>
<dbReference type="PDB" id="8GXS">
    <property type="method" value="EM"/>
    <property type="resolution" value="4.16 A"/>
    <property type="chains" value="HG=1-395"/>
</dbReference>
<dbReference type="PDB" id="8WAK">
    <property type="method" value="EM"/>
    <property type="resolution" value="5.47 A"/>
    <property type="chains" value="2=1-395"/>
</dbReference>
<dbReference type="PDB" id="8WAL">
    <property type="method" value="EM"/>
    <property type="resolution" value="8.52 A"/>
    <property type="chains" value="2=1-395"/>
</dbReference>
<dbReference type="PDB" id="8WAN">
    <property type="method" value="EM"/>
    <property type="resolution" value="6.07 A"/>
    <property type="chains" value="2=1-395"/>
</dbReference>
<dbReference type="PDB" id="8WAO">
    <property type="method" value="EM"/>
    <property type="resolution" value="6.40 A"/>
    <property type="chains" value="2=1-395"/>
</dbReference>
<dbReference type="PDB" id="8WAP">
    <property type="method" value="EM"/>
    <property type="resolution" value="5.85 A"/>
    <property type="chains" value="2=1-395"/>
</dbReference>
<dbReference type="PDB" id="8WAQ">
    <property type="method" value="EM"/>
    <property type="resolution" value="6.29 A"/>
    <property type="chains" value="2=1-395"/>
</dbReference>
<dbReference type="PDB" id="8WAR">
    <property type="method" value="EM"/>
    <property type="resolution" value="7.20 A"/>
    <property type="chains" value="2=1-395"/>
</dbReference>
<dbReference type="PDB" id="8WAS">
    <property type="method" value="EM"/>
    <property type="resolution" value="6.13 A"/>
    <property type="chains" value="2=1-395"/>
</dbReference>
<dbReference type="PDBsum" id="1Z60"/>
<dbReference type="PDBsum" id="5IVW"/>
<dbReference type="PDBsum" id="5IY6"/>
<dbReference type="PDBsum" id="5IY7"/>
<dbReference type="PDBsum" id="5IY8"/>
<dbReference type="PDBsum" id="5IY9"/>
<dbReference type="PDBsum" id="5O85"/>
<dbReference type="PDBsum" id="5OF4"/>
<dbReference type="PDBsum" id="6NMI"/>
<dbReference type="PDBsum" id="6O9L"/>
<dbReference type="PDBsum" id="6O9M"/>
<dbReference type="PDBsum" id="6RO4"/>
<dbReference type="PDBsum" id="7AD8"/>
<dbReference type="PDBsum" id="7EGB"/>
<dbReference type="PDBsum" id="7EGC"/>
<dbReference type="PDBsum" id="7ENA"/>
<dbReference type="PDBsum" id="7ENC"/>
<dbReference type="PDBsum" id="7LBM"/>
<dbReference type="PDBsum" id="7NVR"/>
<dbReference type="PDBsum" id="7NVW"/>
<dbReference type="PDBsum" id="7NVX"/>
<dbReference type="PDBsum" id="7NVY"/>
<dbReference type="PDBsum" id="7NVZ"/>
<dbReference type="PDBsum" id="7NW0"/>
<dbReference type="PDBsum" id="8BVW"/>
<dbReference type="PDBsum" id="8BYQ"/>
<dbReference type="PDBsum" id="8EBS"/>
<dbReference type="PDBsum" id="8EBT"/>
<dbReference type="PDBsum" id="8EBU"/>
<dbReference type="PDBsum" id="8EBV"/>
<dbReference type="PDBsum" id="8EBW"/>
<dbReference type="PDBsum" id="8EBX"/>
<dbReference type="PDBsum" id="8EBY"/>
<dbReference type="PDBsum" id="8GXQ"/>
<dbReference type="PDBsum" id="8GXS"/>
<dbReference type="PDBsum" id="8WAK"/>
<dbReference type="PDBsum" id="8WAL"/>
<dbReference type="PDBsum" id="8WAN"/>
<dbReference type="PDBsum" id="8WAO"/>
<dbReference type="PDBsum" id="8WAP"/>
<dbReference type="PDBsum" id="8WAQ"/>
<dbReference type="PDBsum" id="8WAR"/>
<dbReference type="PDBsum" id="8WAS"/>
<dbReference type="EMDB" id="EMD-0452"/>
<dbReference type="EMDB" id="EMD-12610"/>
<dbReference type="EMDB" id="EMD-12615"/>
<dbReference type="EMDB" id="EMD-12616"/>
<dbReference type="EMDB" id="EMD-12617"/>
<dbReference type="EMDB" id="EMD-12618"/>
<dbReference type="EMDB" id="EMD-12619"/>
<dbReference type="EMDB" id="EMD-16274"/>
<dbReference type="EMDB" id="EMD-16331"/>
<dbReference type="EMDB" id="EMD-23255"/>
<dbReference type="EMDB" id="EMD-27996"/>
<dbReference type="EMDB" id="EMD-27997"/>
<dbReference type="EMDB" id="EMD-27998"/>
<dbReference type="EMDB" id="EMD-27999"/>
<dbReference type="EMDB" id="EMD-28000"/>
<dbReference type="EMDB" id="EMD-28001"/>
<dbReference type="EMDB" id="EMD-28002"/>
<dbReference type="EMDB" id="EMD-31111"/>
<dbReference type="EMDB" id="EMD-31112"/>
<dbReference type="EMDB" id="EMD-31204"/>
<dbReference type="EMDB" id="EMD-31207"/>
<dbReference type="EMDB" id="EMD-34359"/>
<dbReference type="EMDB" id="EMD-34360"/>
<dbReference type="EMDB" id="EMD-37395"/>
<dbReference type="EMDB" id="EMD-37396"/>
<dbReference type="EMDB" id="EMD-37398"/>
<dbReference type="EMDB" id="EMD-37399"/>
<dbReference type="EMDB" id="EMD-37400"/>
<dbReference type="EMDB" id="EMD-37401"/>
<dbReference type="EMDB" id="EMD-37402"/>
<dbReference type="EMDB" id="EMD-37403"/>
<dbReference type="EMDB" id="EMD-3802"/>
<dbReference type="EMDB" id="EMD-4970"/>
<dbReference type="EMDB" id="EMD-8131"/>
<dbReference type="EMDB" id="EMD-8132"/>
<dbReference type="EMDB" id="EMD-8133"/>
<dbReference type="EMDB" id="EMD-8134"/>
<dbReference type="SMR" id="Q13888"/>
<dbReference type="BioGRID" id="109221">
    <property type="interactions" value="47"/>
</dbReference>
<dbReference type="BioGRID" id="608768">
    <property type="interactions" value="50"/>
</dbReference>
<dbReference type="ComplexPortal" id="CPX-2395">
    <property type="entry name" value="General transcription factor TFIIH complex"/>
</dbReference>
<dbReference type="CORUM" id="Q13888"/>
<dbReference type="DIP" id="DIP-786N"/>
<dbReference type="FunCoup" id="Q13888">
    <property type="interactions" value="828"/>
</dbReference>
<dbReference type="IntAct" id="Q13888">
    <property type="interactions" value="26"/>
</dbReference>
<dbReference type="MINT" id="Q13888"/>
<dbReference type="STRING" id="9606.ENSP00000274400"/>
<dbReference type="iPTMnet" id="Q13888"/>
<dbReference type="PhosphoSitePlus" id="Q13888"/>
<dbReference type="SwissPalm" id="Q13888"/>
<dbReference type="BioMuta" id="GTF2H2"/>
<dbReference type="DMDM" id="17380326"/>
<dbReference type="jPOST" id="Q13888"/>
<dbReference type="MassIVE" id="Q13888"/>
<dbReference type="PaxDb" id="9606-ENSP00000328901"/>
<dbReference type="PeptideAtlas" id="Q13888"/>
<dbReference type="ProteomicsDB" id="59716">
    <molecule id="Q13888-1"/>
</dbReference>
<dbReference type="Pumba" id="Q13888"/>
<dbReference type="Antibodypedia" id="12115">
    <property type="antibodies" value="224 antibodies from 29 providers"/>
</dbReference>
<dbReference type="DNASU" id="2966"/>
<dbReference type="Ensembl" id="ENST00000274400.10">
    <molecule id="Q13888-1"/>
    <property type="protein sequence ID" value="ENSP00000274400.5"/>
    <property type="gene ID" value="ENSG00000145736.15"/>
</dbReference>
<dbReference type="Ensembl" id="ENST00000330280.11">
    <molecule id="Q13888-1"/>
    <property type="protein sequence ID" value="ENSP00000328901.6"/>
    <property type="gene ID" value="ENSG00000145736.15"/>
</dbReference>
<dbReference type="Ensembl" id="ENST00000612581.4">
    <molecule id="Q13888-1"/>
    <property type="protein sequence ID" value="ENSP00000480548.1"/>
    <property type="gene ID" value="ENSG00000276910.4"/>
</dbReference>
<dbReference type="Ensembl" id="ENST00000617228.4">
    <molecule id="Q13888-1"/>
    <property type="protein sequence ID" value="ENSP00000479262.1"/>
    <property type="gene ID" value="ENSG00000275045.4"/>
</dbReference>
<dbReference type="Ensembl" id="ENST00000619997.4">
    <molecule id="Q13888-1"/>
    <property type="protein sequence ID" value="ENSP00000477954.1"/>
    <property type="gene ID" value="ENSG00000275045.4"/>
</dbReference>
<dbReference type="Ensembl" id="ENST00000628423.2">
    <molecule id="Q13888-1"/>
    <property type="protein sequence ID" value="ENSP00000486014.1"/>
    <property type="gene ID" value="ENSG00000276910.4"/>
</dbReference>
<dbReference type="GeneID" id="2966"/>
<dbReference type="KEGG" id="hsa:2966"/>
<dbReference type="MANE-Select" id="ENST00000274400.10">
    <property type="protein sequence ID" value="ENSP00000274400.5"/>
    <property type="RefSeq nucleotide sequence ID" value="NM_001515.4"/>
    <property type="RefSeq protein sequence ID" value="NP_001506.1"/>
</dbReference>
<dbReference type="UCSC" id="uc003kau.6">
    <molecule id="Q13888-1"/>
    <property type="organism name" value="human"/>
</dbReference>
<dbReference type="AGR" id="HGNC:4656"/>
<dbReference type="CTD" id="2966"/>
<dbReference type="DisGeNET" id="2966"/>
<dbReference type="GeneCards" id="GTF2H2"/>
<dbReference type="HGNC" id="HGNC:4656">
    <property type="gene designation" value="GTF2H2"/>
</dbReference>
<dbReference type="HPA" id="ENSG00000145736">
    <property type="expression patterns" value="Low tissue specificity"/>
</dbReference>
<dbReference type="MIM" id="601748">
    <property type="type" value="gene"/>
</dbReference>
<dbReference type="neXtProt" id="NX_Q13888"/>
<dbReference type="OpenTargets" id="ENSG00000145736"/>
<dbReference type="PharmGKB" id="PA29042"/>
<dbReference type="VEuPathDB" id="HostDB:ENSG00000145736"/>
<dbReference type="eggNOG" id="KOG2807">
    <property type="taxonomic scope" value="Eukaryota"/>
</dbReference>
<dbReference type="GeneTree" id="ENSGT00490000043395"/>
<dbReference type="HOGENOM" id="CLU_028556_1_0_1"/>
<dbReference type="InParanoid" id="Q13888"/>
<dbReference type="OMA" id="INWVEVP"/>
<dbReference type="OrthoDB" id="284275at2759"/>
<dbReference type="PAN-GO" id="Q13888">
    <property type="GO annotations" value="3 GO annotations based on evolutionary models"/>
</dbReference>
<dbReference type="PhylomeDB" id="Q13888"/>
<dbReference type="TreeFam" id="TF314037"/>
<dbReference type="PathwayCommons" id="Q13888"/>
<dbReference type="Reactome" id="R-HSA-112382">
    <property type="pathway name" value="Formation of RNA Pol II elongation complex"/>
</dbReference>
<dbReference type="Reactome" id="R-HSA-113418">
    <property type="pathway name" value="Formation of the Early Elongation Complex"/>
</dbReference>
<dbReference type="Reactome" id="R-HSA-167152">
    <property type="pathway name" value="Formation of HIV elongation complex in the absence of HIV Tat"/>
</dbReference>
<dbReference type="Reactome" id="R-HSA-167158">
    <property type="pathway name" value="Formation of the HIV-1 Early Elongation Complex"/>
</dbReference>
<dbReference type="Reactome" id="R-HSA-167160">
    <property type="pathway name" value="RNA Pol II CTD phosphorylation and interaction with CE during HIV infection"/>
</dbReference>
<dbReference type="Reactome" id="R-HSA-167161">
    <property type="pathway name" value="HIV Transcription Initiation"/>
</dbReference>
<dbReference type="Reactome" id="R-HSA-167162">
    <property type="pathway name" value="RNA Polymerase II HIV Promoter Escape"/>
</dbReference>
<dbReference type="Reactome" id="R-HSA-167172">
    <property type="pathway name" value="Transcription of the HIV genome"/>
</dbReference>
<dbReference type="Reactome" id="R-HSA-167200">
    <property type="pathway name" value="Formation of HIV-1 elongation complex containing HIV-1 Tat"/>
</dbReference>
<dbReference type="Reactome" id="R-HSA-167246">
    <property type="pathway name" value="Tat-mediated elongation of the HIV-1 transcript"/>
</dbReference>
<dbReference type="Reactome" id="R-HSA-427413">
    <property type="pathway name" value="NoRC negatively regulates rRNA expression"/>
</dbReference>
<dbReference type="Reactome" id="R-HSA-5696395">
    <property type="pathway name" value="Formation of Incision Complex in GG-NER"/>
</dbReference>
<dbReference type="Reactome" id="R-HSA-5696400">
    <property type="pathway name" value="Dual Incision in GG-NER"/>
</dbReference>
<dbReference type="Reactome" id="R-HSA-674695">
    <property type="pathway name" value="RNA Polymerase II Pre-transcription Events"/>
</dbReference>
<dbReference type="Reactome" id="R-HSA-6781823">
    <property type="pathway name" value="Formation of TC-NER Pre-Incision Complex"/>
</dbReference>
<dbReference type="Reactome" id="R-HSA-6781827">
    <property type="pathway name" value="Transcription-Coupled Nucleotide Excision Repair (TC-NER)"/>
</dbReference>
<dbReference type="Reactome" id="R-HSA-6782135">
    <property type="pathway name" value="Dual incision in TC-NER"/>
</dbReference>
<dbReference type="Reactome" id="R-HSA-6782210">
    <property type="pathway name" value="Gap-filling DNA repair synthesis and ligation in TC-NER"/>
</dbReference>
<dbReference type="Reactome" id="R-HSA-6796648">
    <property type="pathway name" value="TP53 Regulates Transcription of DNA Repair Genes"/>
</dbReference>
<dbReference type="Reactome" id="R-HSA-72086">
    <property type="pathway name" value="mRNA Capping"/>
</dbReference>
<dbReference type="Reactome" id="R-HSA-73762">
    <property type="pathway name" value="RNA Polymerase I Transcription Initiation"/>
</dbReference>
<dbReference type="Reactome" id="R-HSA-73772">
    <property type="pathway name" value="RNA Polymerase I Promoter Escape"/>
</dbReference>
<dbReference type="Reactome" id="R-HSA-73776">
    <property type="pathway name" value="RNA Polymerase II Promoter Escape"/>
</dbReference>
<dbReference type="Reactome" id="R-HSA-73779">
    <property type="pathway name" value="RNA Polymerase II Transcription Pre-Initiation And Promoter Opening"/>
</dbReference>
<dbReference type="Reactome" id="R-HSA-73863">
    <property type="pathway name" value="RNA Polymerase I Transcription Termination"/>
</dbReference>
<dbReference type="Reactome" id="R-HSA-75953">
    <property type="pathway name" value="RNA Polymerase II Transcription Initiation"/>
</dbReference>
<dbReference type="Reactome" id="R-HSA-75955">
    <property type="pathway name" value="RNA Polymerase II Transcription Elongation"/>
</dbReference>
<dbReference type="Reactome" id="R-HSA-76042">
    <property type="pathway name" value="RNA Polymerase II Transcription Initiation And Promoter Clearance"/>
</dbReference>
<dbReference type="Reactome" id="R-HSA-77075">
    <property type="pathway name" value="RNA Pol II CTD phosphorylation and interaction with CE"/>
</dbReference>
<dbReference type="SignaLink" id="Q13888"/>
<dbReference type="SIGNOR" id="Q13888"/>
<dbReference type="BioGRID-ORCS" id="2966">
    <property type="hits" value="357 hits in 1035 CRISPR screens"/>
</dbReference>
<dbReference type="CD-CODE" id="91857CE7">
    <property type="entry name" value="Nucleolus"/>
</dbReference>
<dbReference type="ChiTaRS" id="GTF2H2">
    <property type="organism name" value="human"/>
</dbReference>
<dbReference type="EvolutionaryTrace" id="Q13888"/>
<dbReference type="GeneWiki" id="GTF2H2"/>
<dbReference type="GenomeRNAi" id="2966"/>
<dbReference type="Pharos" id="Q13888">
    <property type="development level" value="Tbio"/>
</dbReference>
<dbReference type="PRO" id="PR:Q13888"/>
<dbReference type="Proteomes" id="UP000005640">
    <property type="component" value="Chromosome 5"/>
</dbReference>
<dbReference type="RNAct" id="Q13888">
    <property type="molecule type" value="protein"/>
</dbReference>
<dbReference type="Bgee" id="ENSG00000145736">
    <property type="expression patterns" value="Expressed in endometrium and 101 other cell types or tissues"/>
</dbReference>
<dbReference type="ExpressionAtlas" id="Q13888">
    <property type="expression patterns" value="baseline and differential"/>
</dbReference>
<dbReference type="GO" id="GO:0000438">
    <property type="term" value="C:core TFIIH complex portion of holo TFIIH complex"/>
    <property type="evidence" value="ECO:0000314"/>
    <property type="project" value="UniProtKB"/>
</dbReference>
<dbReference type="GO" id="GO:0016607">
    <property type="term" value="C:nuclear speck"/>
    <property type="evidence" value="ECO:0000314"/>
    <property type="project" value="HPA"/>
</dbReference>
<dbReference type="GO" id="GO:0005654">
    <property type="term" value="C:nucleoplasm"/>
    <property type="evidence" value="ECO:0000304"/>
    <property type="project" value="Reactome"/>
</dbReference>
<dbReference type="GO" id="GO:0005634">
    <property type="term" value="C:nucleus"/>
    <property type="evidence" value="ECO:0000314"/>
    <property type="project" value="UniProtKB"/>
</dbReference>
<dbReference type="GO" id="GO:0005669">
    <property type="term" value="C:transcription factor TFIID complex"/>
    <property type="evidence" value="ECO:0000314"/>
    <property type="project" value="UniProtKB"/>
</dbReference>
<dbReference type="GO" id="GO:0000439">
    <property type="term" value="C:transcription factor TFIIH core complex"/>
    <property type="evidence" value="ECO:0000314"/>
    <property type="project" value="UniProtKB"/>
</dbReference>
<dbReference type="GO" id="GO:0005675">
    <property type="term" value="C:transcription factor TFIIH holo complex"/>
    <property type="evidence" value="ECO:0000314"/>
    <property type="project" value="UniProtKB"/>
</dbReference>
<dbReference type="GO" id="GO:0016251">
    <property type="term" value="F:RNA polymerase II general transcription initiation factor activity"/>
    <property type="evidence" value="ECO:0000314"/>
    <property type="project" value="GO_Central"/>
</dbReference>
<dbReference type="GO" id="GO:0008270">
    <property type="term" value="F:zinc ion binding"/>
    <property type="evidence" value="ECO:0007669"/>
    <property type="project" value="UniProtKB-KW"/>
</dbReference>
<dbReference type="GO" id="GO:0002031">
    <property type="term" value="P:G protein-coupled receptor internalization"/>
    <property type="evidence" value="ECO:0000315"/>
    <property type="project" value="UniProtKB"/>
</dbReference>
<dbReference type="GO" id="GO:0006289">
    <property type="term" value="P:nucleotide-excision repair"/>
    <property type="evidence" value="ECO:0000318"/>
    <property type="project" value="GO_Central"/>
</dbReference>
<dbReference type="GO" id="GO:0006357">
    <property type="term" value="P:regulation of transcription by RNA polymerase II"/>
    <property type="evidence" value="ECO:0000318"/>
    <property type="project" value="GO_Central"/>
</dbReference>
<dbReference type="GO" id="GO:0009411">
    <property type="term" value="P:response to UV"/>
    <property type="evidence" value="ECO:0000304"/>
    <property type="project" value="ProtInc"/>
</dbReference>
<dbReference type="GO" id="GO:0006366">
    <property type="term" value="P:transcription by RNA polymerase II"/>
    <property type="evidence" value="ECO:0000314"/>
    <property type="project" value="UniProtKB"/>
</dbReference>
<dbReference type="GO" id="GO:0006367">
    <property type="term" value="P:transcription initiation at RNA polymerase II promoter"/>
    <property type="evidence" value="ECO:0000314"/>
    <property type="project" value="GO_Central"/>
</dbReference>
<dbReference type="CDD" id="cd01453">
    <property type="entry name" value="vWA_transcription_factor_IIH_type"/>
    <property type="match status" value="1"/>
</dbReference>
<dbReference type="FunFam" id="3.30.40.10:FF:000282">
    <property type="entry name" value="General transcription factor IIH subunit"/>
    <property type="match status" value="1"/>
</dbReference>
<dbReference type="FunFam" id="3.40.50.410:FF:000015">
    <property type="entry name" value="General transcription factor IIH subunit 2"/>
    <property type="match status" value="1"/>
</dbReference>
<dbReference type="Gene3D" id="3.40.50.410">
    <property type="entry name" value="von Willebrand factor, type A domain"/>
    <property type="match status" value="1"/>
</dbReference>
<dbReference type="Gene3D" id="3.30.40.10">
    <property type="entry name" value="Zinc/RING finger domain, C3HC4 (zinc finger)"/>
    <property type="match status" value="1"/>
</dbReference>
<dbReference type="InterPro" id="IPR046349">
    <property type="entry name" value="C1-like_sf"/>
</dbReference>
<dbReference type="InterPro" id="IPR007198">
    <property type="entry name" value="Ssl1-like"/>
</dbReference>
<dbReference type="InterPro" id="IPR004595">
    <property type="entry name" value="TFIIH_C1-like_dom"/>
</dbReference>
<dbReference type="InterPro" id="IPR012170">
    <property type="entry name" value="TFIIH_SSL1/p44"/>
</dbReference>
<dbReference type="InterPro" id="IPR002035">
    <property type="entry name" value="VWF_A"/>
</dbReference>
<dbReference type="InterPro" id="IPR036465">
    <property type="entry name" value="vWFA_dom_sf"/>
</dbReference>
<dbReference type="InterPro" id="IPR013087">
    <property type="entry name" value="Znf_C2H2_type"/>
</dbReference>
<dbReference type="InterPro" id="IPR013083">
    <property type="entry name" value="Znf_RING/FYVE/PHD"/>
</dbReference>
<dbReference type="NCBIfam" id="TIGR00622">
    <property type="entry name" value="ssl1"/>
    <property type="match status" value="1"/>
</dbReference>
<dbReference type="PANTHER" id="PTHR12695">
    <property type="entry name" value="GENERAL TRANSCRIPTION FACTOR IIH SUBUNIT 2"/>
    <property type="match status" value="1"/>
</dbReference>
<dbReference type="PANTHER" id="PTHR12695:SF2">
    <property type="entry name" value="GENERAL TRANSCRIPTION FACTOR IIH SUBUNIT 2-RELATED"/>
    <property type="match status" value="1"/>
</dbReference>
<dbReference type="Pfam" id="PF07975">
    <property type="entry name" value="C1_4"/>
    <property type="match status" value="1"/>
</dbReference>
<dbReference type="Pfam" id="PF04056">
    <property type="entry name" value="Ssl1"/>
    <property type="match status" value="1"/>
</dbReference>
<dbReference type="PIRSF" id="PIRSF015919">
    <property type="entry name" value="TFIIH_SSL1"/>
    <property type="match status" value="1"/>
</dbReference>
<dbReference type="SMART" id="SM01047">
    <property type="entry name" value="C1_4"/>
    <property type="match status" value="1"/>
</dbReference>
<dbReference type="SMART" id="SM00327">
    <property type="entry name" value="VWA"/>
    <property type="match status" value="1"/>
</dbReference>
<dbReference type="SUPFAM" id="SSF57889">
    <property type="entry name" value="Cysteine-rich domain"/>
    <property type="match status" value="1"/>
</dbReference>
<dbReference type="SUPFAM" id="SSF53300">
    <property type="entry name" value="vWA-like"/>
    <property type="match status" value="1"/>
</dbReference>
<dbReference type="PROSITE" id="PS50234">
    <property type="entry name" value="VWFA"/>
    <property type="match status" value="1"/>
</dbReference>
<name>TF2H2_HUMAN</name>